<organism>
    <name type="scientific">Escherichia coli O157:H7</name>
    <dbReference type="NCBI Taxonomy" id="83334"/>
    <lineage>
        <taxon>Bacteria</taxon>
        <taxon>Pseudomonadati</taxon>
        <taxon>Pseudomonadota</taxon>
        <taxon>Gammaproteobacteria</taxon>
        <taxon>Enterobacterales</taxon>
        <taxon>Enterobacteriaceae</taxon>
        <taxon>Escherichia</taxon>
    </lineage>
</organism>
<name>YFCD_ECO57</name>
<feature type="chain" id="PRO_0000057079" description="Uncharacterized Nudix hydrolase YfcD">
    <location>
        <begin position="1"/>
        <end position="180"/>
    </location>
</feature>
<feature type="domain" description="Nudix hydrolase" evidence="2">
    <location>
        <begin position="35"/>
        <end position="163"/>
    </location>
</feature>
<feature type="short sequence motif" description="Nudix box">
    <location>
        <begin position="72"/>
        <end position="94"/>
    </location>
</feature>
<feature type="binding site" evidence="1">
    <location>
        <position position="88"/>
    </location>
    <ligand>
        <name>Mg(2+)</name>
        <dbReference type="ChEBI" id="CHEBI:18420"/>
    </ligand>
</feature>
<feature type="binding site" evidence="1">
    <location>
        <position position="92"/>
    </location>
    <ligand>
        <name>Mg(2+)</name>
        <dbReference type="ChEBI" id="CHEBI:18420"/>
    </ligand>
</feature>
<dbReference type="EC" id="3.6.-.-"/>
<dbReference type="EMBL" id="AE005174">
    <property type="protein sequence ID" value="AAG57428.1"/>
    <property type="molecule type" value="Genomic_DNA"/>
</dbReference>
<dbReference type="EMBL" id="BA000007">
    <property type="protein sequence ID" value="BAB36606.1"/>
    <property type="molecule type" value="Genomic_DNA"/>
</dbReference>
<dbReference type="PIR" id="G91026">
    <property type="entry name" value="G91026"/>
</dbReference>
<dbReference type="PIR" id="H85870">
    <property type="entry name" value="H85870"/>
</dbReference>
<dbReference type="RefSeq" id="NP_311210.1">
    <property type="nucleotide sequence ID" value="NC_002695.1"/>
</dbReference>
<dbReference type="RefSeq" id="WP_000437935.1">
    <property type="nucleotide sequence ID" value="NZ_VOAI01000001.1"/>
</dbReference>
<dbReference type="SMR" id="P65558"/>
<dbReference type="STRING" id="155864.Z3561"/>
<dbReference type="GeneID" id="916891"/>
<dbReference type="GeneID" id="93774875"/>
<dbReference type="KEGG" id="ece:Z3561"/>
<dbReference type="KEGG" id="ecs:ECs_3183"/>
<dbReference type="PATRIC" id="fig|386585.9.peg.3323"/>
<dbReference type="eggNOG" id="COG1443">
    <property type="taxonomic scope" value="Bacteria"/>
</dbReference>
<dbReference type="HOGENOM" id="CLU_060552_3_0_6"/>
<dbReference type="OMA" id="KDFYPGW"/>
<dbReference type="Proteomes" id="UP000000558">
    <property type="component" value="Chromosome"/>
</dbReference>
<dbReference type="Proteomes" id="UP000002519">
    <property type="component" value="Chromosome"/>
</dbReference>
<dbReference type="GO" id="GO:0016817">
    <property type="term" value="F:hydrolase activity, acting on acid anhydrides"/>
    <property type="evidence" value="ECO:0007669"/>
    <property type="project" value="InterPro"/>
</dbReference>
<dbReference type="GO" id="GO:0046872">
    <property type="term" value="F:metal ion binding"/>
    <property type="evidence" value="ECO:0007669"/>
    <property type="project" value="UniProtKB-KW"/>
</dbReference>
<dbReference type="CDD" id="cd04697">
    <property type="entry name" value="NUDIX_Hydrolase"/>
    <property type="match status" value="1"/>
</dbReference>
<dbReference type="FunFam" id="3.90.79.10:FF:000007">
    <property type="entry name" value="NUDIX hydrolase YfcD"/>
    <property type="match status" value="1"/>
</dbReference>
<dbReference type="Gene3D" id="3.90.79.10">
    <property type="entry name" value="Nucleoside Triphosphate Pyrophosphohydrolase"/>
    <property type="match status" value="1"/>
</dbReference>
<dbReference type="InterPro" id="IPR015797">
    <property type="entry name" value="NUDIX_hydrolase-like_dom_sf"/>
</dbReference>
<dbReference type="InterPro" id="IPR000086">
    <property type="entry name" value="NUDIX_hydrolase_dom"/>
</dbReference>
<dbReference type="InterPro" id="IPR024195">
    <property type="entry name" value="NUDIX_hydrolase_YfcD_pred"/>
</dbReference>
<dbReference type="NCBIfam" id="NF011922">
    <property type="entry name" value="PRK15393.1"/>
    <property type="match status" value="1"/>
</dbReference>
<dbReference type="PANTHER" id="PTHR10885">
    <property type="entry name" value="ISOPENTENYL-DIPHOSPHATE DELTA-ISOMERASE"/>
    <property type="match status" value="1"/>
</dbReference>
<dbReference type="PANTHER" id="PTHR10885:SF0">
    <property type="entry name" value="ISOPENTENYL-DIPHOSPHATE DELTA-ISOMERASE"/>
    <property type="match status" value="1"/>
</dbReference>
<dbReference type="Pfam" id="PF00293">
    <property type="entry name" value="NUDIX"/>
    <property type="match status" value="1"/>
</dbReference>
<dbReference type="PIRSF" id="PIRSF017340">
    <property type="entry name" value="Nudix_hydro"/>
    <property type="match status" value="1"/>
</dbReference>
<dbReference type="SUPFAM" id="SSF55811">
    <property type="entry name" value="Nudix"/>
    <property type="match status" value="1"/>
</dbReference>
<dbReference type="PROSITE" id="PS51462">
    <property type="entry name" value="NUDIX"/>
    <property type="match status" value="1"/>
</dbReference>
<keyword id="KW-0378">Hydrolase</keyword>
<keyword id="KW-0460">Magnesium</keyword>
<keyword id="KW-0479">Metal-binding</keyword>
<keyword id="KW-1185">Reference proteome</keyword>
<reference key="1">
    <citation type="journal article" date="2001" name="Nature">
        <title>Genome sequence of enterohaemorrhagic Escherichia coli O157:H7.</title>
        <authorList>
            <person name="Perna N.T."/>
            <person name="Plunkett G. III"/>
            <person name="Burland V."/>
            <person name="Mau B."/>
            <person name="Glasner J.D."/>
            <person name="Rose D.J."/>
            <person name="Mayhew G.F."/>
            <person name="Evans P.S."/>
            <person name="Gregor J."/>
            <person name="Kirkpatrick H.A."/>
            <person name="Posfai G."/>
            <person name="Hackett J."/>
            <person name="Klink S."/>
            <person name="Boutin A."/>
            <person name="Shao Y."/>
            <person name="Miller L."/>
            <person name="Grotbeck E.J."/>
            <person name="Davis N.W."/>
            <person name="Lim A."/>
            <person name="Dimalanta E.T."/>
            <person name="Potamousis K."/>
            <person name="Apodaca J."/>
            <person name="Anantharaman T.S."/>
            <person name="Lin J."/>
            <person name="Yen G."/>
            <person name="Schwartz D.C."/>
            <person name="Welch R.A."/>
            <person name="Blattner F.R."/>
        </authorList>
    </citation>
    <scope>NUCLEOTIDE SEQUENCE [LARGE SCALE GENOMIC DNA]</scope>
    <source>
        <strain>O157:H7 / EDL933 / ATCC 700927 / EHEC</strain>
    </source>
</reference>
<reference key="2">
    <citation type="journal article" date="2001" name="DNA Res.">
        <title>Complete genome sequence of enterohemorrhagic Escherichia coli O157:H7 and genomic comparison with a laboratory strain K-12.</title>
        <authorList>
            <person name="Hayashi T."/>
            <person name="Makino K."/>
            <person name="Ohnishi M."/>
            <person name="Kurokawa K."/>
            <person name="Ishii K."/>
            <person name="Yokoyama K."/>
            <person name="Han C.-G."/>
            <person name="Ohtsubo E."/>
            <person name="Nakayama K."/>
            <person name="Murata T."/>
            <person name="Tanaka M."/>
            <person name="Tobe T."/>
            <person name="Iida T."/>
            <person name="Takami H."/>
            <person name="Honda T."/>
            <person name="Sasakawa C."/>
            <person name="Ogasawara N."/>
            <person name="Yasunaga T."/>
            <person name="Kuhara S."/>
            <person name="Shiba T."/>
            <person name="Hattori M."/>
            <person name="Shinagawa H."/>
        </authorList>
    </citation>
    <scope>NUCLEOTIDE SEQUENCE [LARGE SCALE GENOMIC DNA]</scope>
    <source>
        <strain>O157:H7 / Sakai / RIMD 0509952 / EHEC</strain>
    </source>
</reference>
<protein>
    <recommendedName>
        <fullName>Uncharacterized Nudix hydrolase YfcD</fullName>
        <ecNumber>3.6.-.-</ecNumber>
    </recommendedName>
</protein>
<accession>P65558</accession>
<accession>P76494</accession>
<evidence type="ECO:0000250" key="1"/>
<evidence type="ECO:0000255" key="2">
    <source>
        <dbReference type="PROSITE-ProRule" id="PRU00794"/>
    </source>
</evidence>
<evidence type="ECO:0000305" key="3"/>
<sequence>MEQRRLASTEWVDIVNEENEVIAQASREQMRAQCLRHRATYIVVHDGMGKILVQRRTETKDFLPGMLDATAGGVVQADEQLLESARREAEEELGIAGVPFAEHGQFYFEDKNCRVWGALFSCVSHGPFALQEDEVSEVCWLTPEEITARCDEFTPDSLKALALWMKRNAKNEAVETETAE</sequence>
<comment type="cofactor">
    <cofactor evidence="1">
        <name>Mg(2+)</name>
        <dbReference type="ChEBI" id="CHEBI:18420"/>
    </cofactor>
</comment>
<comment type="similarity">
    <text evidence="3">Belongs to the Nudix hydrolase family.</text>
</comment>
<proteinExistence type="inferred from homology"/>
<gene>
    <name type="primary">yfcD</name>
    <name type="ordered locus">Z3561</name>
    <name type="ordered locus">ECs3183</name>
</gene>